<comment type="function">
    <text evidence="1">Usually encoded in the trnK tRNA gene intron. Probably assists in splicing its own and other chloroplast group II introns.</text>
</comment>
<comment type="subcellular location">
    <subcellularLocation>
        <location>Plastid</location>
        <location>Chloroplast</location>
    </subcellularLocation>
</comment>
<comment type="similarity">
    <text evidence="1">Belongs to the intron maturase 2 family. MatK subfamily.</text>
</comment>
<proteinExistence type="inferred from homology"/>
<geneLocation type="chloroplast"/>
<feature type="chain" id="PRO_0000143311" description="Maturase K">
    <location>
        <begin position="1"/>
        <end position="504"/>
    </location>
</feature>
<accession>P68749</accession>
<accession>Q8W7V1</accession>
<keyword id="KW-0150">Chloroplast</keyword>
<keyword id="KW-0507">mRNA processing</keyword>
<keyword id="KW-0934">Plastid</keyword>
<keyword id="KW-0694">RNA-binding</keyword>
<keyword id="KW-0819">tRNA processing</keyword>
<dbReference type="EMBL" id="AJ417513">
    <property type="protein sequence ID" value="CAD10362.1"/>
    <property type="molecule type" value="Genomic_DNA"/>
</dbReference>
<dbReference type="EMBL" id="AJ417515">
    <property type="protein sequence ID" value="CAD10364.1"/>
    <property type="molecule type" value="Genomic_DNA"/>
</dbReference>
<dbReference type="GO" id="GO:0009507">
    <property type="term" value="C:chloroplast"/>
    <property type="evidence" value="ECO:0007669"/>
    <property type="project" value="UniProtKB-SubCell"/>
</dbReference>
<dbReference type="GO" id="GO:0003723">
    <property type="term" value="F:RNA binding"/>
    <property type="evidence" value="ECO:0007669"/>
    <property type="project" value="UniProtKB-KW"/>
</dbReference>
<dbReference type="GO" id="GO:0006397">
    <property type="term" value="P:mRNA processing"/>
    <property type="evidence" value="ECO:0007669"/>
    <property type="project" value="UniProtKB-KW"/>
</dbReference>
<dbReference type="GO" id="GO:0008380">
    <property type="term" value="P:RNA splicing"/>
    <property type="evidence" value="ECO:0007669"/>
    <property type="project" value="UniProtKB-UniRule"/>
</dbReference>
<dbReference type="GO" id="GO:0008033">
    <property type="term" value="P:tRNA processing"/>
    <property type="evidence" value="ECO:0007669"/>
    <property type="project" value="UniProtKB-KW"/>
</dbReference>
<dbReference type="HAMAP" id="MF_01390">
    <property type="entry name" value="MatK"/>
    <property type="match status" value="1"/>
</dbReference>
<dbReference type="InterPro" id="IPR024937">
    <property type="entry name" value="Domain_X"/>
</dbReference>
<dbReference type="InterPro" id="IPR002866">
    <property type="entry name" value="Maturase_MatK"/>
</dbReference>
<dbReference type="InterPro" id="IPR024942">
    <property type="entry name" value="Maturase_MatK_N"/>
</dbReference>
<dbReference type="PANTHER" id="PTHR34811">
    <property type="entry name" value="MATURASE K"/>
    <property type="match status" value="1"/>
</dbReference>
<dbReference type="PANTHER" id="PTHR34811:SF1">
    <property type="entry name" value="MATURASE K"/>
    <property type="match status" value="1"/>
</dbReference>
<dbReference type="Pfam" id="PF01348">
    <property type="entry name" value="Intron_maturas2"/>
    <property type="match status" value="1"/>
</dbReference>
<dbReference type="Pfam" id="PF01824">
    <property type="entry name" value="MatK_N"/>
    <property type="match status" value="1"/>
</dbReference>
<protein>
    <recommendedName>
        <fullName evidence="1">Maturase K</fullName>
    </recommendedName>
    <alternativeName>
        <fullName evidence="1">Intron maturase</fullName>
    </alternativeName>
</protein>
<reference key="1">
    <citation type="submission" date="2001-10" db="EMBL/GenBank/DDBJ databases">
        <title>Chloroplast DNA phylogeography of the hornbeam in Europe: evidence for a bottleneck at the outset of postglacial colonization.</title>
        <authorList>
            <person name="Grivet D."/>
            <person name="Petit R.J."/>
        </authorList>
    </citation>
    <scope>NUCLEOTIDE SEQUENCE [GENOMIC DNA]</scope>
    <source>
        <strain>Isolate 16CB01</strain>
        <strain>Isolate 38CB01</strain>
    </source>
</reference>
<organism>
    <name type="scientific">Carpinus betulus</name>
    <name type="common">European hornbeam</name>
    <name type="synonym">Carpinus caucasica</name>
    <dbReference type="NCBI Taxonomy" id="12990"/>
    <lineage>
        <taxon>Eukaryota</taxon>
        <taxon>Viridiplantae</taxon>
        <taxon>Streptophyta</taxon>
        <taxon>Embryophyta</taxon>
        <taxon>Tracheophyta</taxon>
        <taxon>Spermatophyta</taxon>
        <taxon>Magnoliopsida</taxon>
        <taxon>eudicotyledons</taxon>
        <taxon>Gunneridae</taxon>
        <taxon>Pentapetalae</taxon>
        <taxon>rosids</taxon>
        <taxon>fabids</taxon>
        <taxon>Fagales</taxon>
        <taxon>Betulaceae</taxon>
        <taxon>Carpinus</taxon>
    </lineage>
</organism>
<sequence>MEEFQGYLELDRFRQHDFLYPLIFREYIXXXAHDHGLNRVILLENLAYDNKSSLLIVKRLITRMYQQNHLMISANDSNQNRFLGYNKNLYSQMISEGFSIIAEIPYSLRLISSLEGAQIIRSYNLRSIHSIFPFLEDKFPHLNYVADVLIPYPIHLEILVQTLRYRVKDASSLHLLRFFLHEYSNGNILFILNKSISIFSKSNSRLLLFLYNSYICEYESLFLFLRNQSSHLRLTSSGVLFERIYLHRKMGDLAEVFVNDFRGILCFLKDPFIHYVRYQGKSILSSKDTPLLMNKWKYYLVSLWQCHFYVWSHPGRIYINQLSKHSLDFLGYFSNVPLNPSMVPSQMLENSFVINNAPKKLDTIVPIIPLIGSLAKAKFCNALGHPISKPTWADLSDFDIINRFVRICKNLSHYYSGSSKKKGMYRIKYILRLSCVKTLARKHKSTIRAFLKRLGSELFEEFFTEEEEFLSLIFPRTSFTLRRLYRGRVWYLDIICMNGLANHE</sequence>
<gene>
    <name evidence="1" type="primary">matK</name>
</gene>
<name>MATK_CARBE</name>
<evidence type="ECO:0000255" key="1">
    <source>
        <dbReference type="HAMAP-Rule" id="MF_01390"/>
    </source>
</evidence>